<comment type="catalytic activity">
    <reaction evidence="1">
        <text>2-formamido-N(1)-(5-O-phospho-beta-D-ribosyl)acetamidine + ATP = 5-amino-1-(5-phospho-beta-D-ribosyl)imidazole + ADP + phosphate + H(+)</text>
        <dbReference type="Rhea" id="RHEA:23032"/>
        <dbReference type="ChEBI" id="CHEBI:15378"/>
        <dbReference type="ChEBI" id="CHEBI:30616"/>
        <dbReference type="ChEBI" id="CHEBI:43474"/>
        <dbReference type="ChEBI" id="CHEBI:137981"/>
        <dbReference type="ChEBI" id="CHEBI:147287"/>
        <dbReference type="ChEBI" id="CHEBI:456216"/>
        <dbReference type="EC" id="6.3.3.1"/>
    </reaction>
</comment>
<comment type="pathway">
    <text evidence="1">Purine metabolism; IMP biosynthesis via de novo pathway; 5-amino-1-(5-phospho-D-ribosyl)imidazole from N(2)-formyl-N(1)-(5-phospho-D-ribosyl)glycinamide: step 2/2.</text>
</comment>
<comment type="subcellular location">
    <subcellularLocation>
        <location evidence="1">Cytoplasm</location>
    </subcellularLocation>
</comment>
<comment type="similarity">
    <text evidence="1">Belongs to the AIR synthase family.</text>
</comment>
<keyword id="KW-0067">ATP-binding</keyword>
<keyword id="KW-0963">Cytoplasm</keyword>
<keyword id="KW-0436">Ligase</keyword>
<keyword id="KW-0547">Nucleotide-binding</keyword>
<keyword id="KW-0658">Purine biosynthesis</keyword>
<keyword id="KW-1185">Reference proteome</keyword>
<accession>Q2JL07</accession>
<gene>
    <name evidence="1" type="primary">purM</name>
    <name type="ordered locus">CYB_1656</name>
</gene>
<proteinExistence type="inferred from homology"/>
<protein>
    <recommendedName>
        <fullName evidence="1">Phosphoribosylformylglycinamidine cyclo-ligase</fullName>
        <ecNumber evidence="1">6.3.3.1</ecNumber>
    </recommendedName>
    <alternativeName>
        <fullName evidence="1">AIR synthase</fullName>
    </alternativeName>
    <alternativeName>
        <fullName evidence="1">AIRS</fullName>
    </alternativeName>
    <alternativeName>
        <fullName evidence="1">Phosphoribosyl-aminoimidazole synthetase</fullName>
    </alternativeName>
</protein>
<evidence type="ECO:0000255" key="1">
    <source>
        <dbReference type="HAMAP-Rule" id="MF_00741"/>
    </source>
</evidence>
<reference key="1">
    <citation type="journal article" date="2007" name="ISME J.">
        <title>Population level functional diversity in a microbial community revealed by comparative genomic and metagenomic analyses.</title>
        <authorList>
            <person name="Bhaya D."/>
            <person name="Grossman A.R."/>
            <person name="Steunou A.-S."/>
            <person name="Khuri N."/>
            <person name="Cohan F.M."/>
            <person name="Hamamura N."/>
            <person name="Melendrez M.C."/>
            <person name="Bateson M.M."/>
            <person name="Ward D.M."/>
            <person name="Heidelberg J.F."/>
        </authorList>
    </citation>
    <scope>NUCLEOTIDE SEQUENCE [LARGE SCALE GENOMIC DNA]</scope>
    <source>
        <strain>JA-2-3B'a(2-13)</strain>
    </source>
</reference>
<feature type="chain" id="PRO_0000258424" description="Phosphoribosylformylglycinamidine cyclo-ligase">
    <location>
        <begin position="1"/>
        <end position="354"/>
    </location>
</feature>
<name>PUR5_SYNJB</name>
<dbReference type="EC" id="6.3.3.1" evidence="1"/>
<dbReference type="EMBL" id="CP000240">
    <property type="protein sequence ID" value="ABD02615.1"/>
    <property type="molecule type" value="Genomic_DNA"/>
</dbReference>
<dbReference type="RefSeq" id="WP_011433260.1">
    <property type="nucleotide sequence ID" value="NC_007776.1"/>
</dbReference>
<dbReference type="SMR" id="Q2JL07"/>
<dbReference type="STRING" id="321332.CYB_1656"/>
<dbReference type="KEGG" id="cyb:CYB_1656"/>
<dbReference type="eggNOG" id="COG0150">
    <property type="taxonomic scope" value="Bacteria"/>
</dbReference>
<dbReference type="HOGENOM" id="CLU_047116_0_0_3"/>
<dbReference type="OrthoDB" id="9802507at2"/>
<dbReference type="UniPathway" id="UPA00074">
    <property type="reaction ID" value="UER00129"/>
</dbReference>
<dbReference type="Proteomes" id="UP000001938">
    <property type="component" value="Chromosome"/>
</dbReference>
<dbReference type="GO" id="GO:0005829">
    <property type="term" value="C:cytosol"/>
    <property type="evidence" value="ECO:0007669"/>
    <property type="project" value="TreeGrafter"/>
</dbReference>
<dbReference type="GO" id="GO:0005524">
    <property type="term" value="F:ATP binding"/>
    <property type="evidence" value="ECO:0007669"/>
    <property type="project" value="UniProtKB-KW"/>
</dbReference>
<dbReference type="GO" id="GO:0004637">
    <property type="term" value="F:phosphoribosylamine-glycine ligase activity"/>
    <property type="evidence" value="ECO:0007669"/>
    <property type="project" value="TreeGrafter"/>
</dbReference>
<dbReference type="GO" id="GO:0004641">
    <property type="term" value="F:phosphoribosylformylglycinamidine cyclo-ligase activity"/>
    <property type="evidence" value="ECO:0007669"/>
    <property type="project" value="UniProtKB-UniRule"/>
</dbReference>
<dbReference type="GO" id="GO:0006189">
    <property type="term" value="P:'de novo' IMP biosynthetic process"/>
    <property type="evidence" value="ECO:0007669"/>
    <property type="project" value="UniProtKB-UniRule"/>
</dbReference>
<dbReference type="GO" id="GO:0046084">
    <property type="term" value="P:adenine biosynthetic process"/>
    <property type="evidence" value="ECO:0007669"/>
    <property type="project" value="TreeGrafter"/>
</dbReference>
<dbReference type="CDD" id="cd02196">
    <property type="entry name" value="PurM"/>
    <property type="match status" value="1"/>
</dbReference>
<dbReference type="FunFam" id="3.30.1330.10:FF:000001">
    <property type="entry name" value="Phosphoribosylformylglycinamidine cyclo-ligase"/>
    <property type="match status" value="1"/>
</dbReference>
<dbReference type="FunFam" id="3.90.650.10:FF:000011">
    <property type="entry name" value="Phosphoribosylformylglycinamidine cyclo-ligase"/>
    <property type="match status" value="1"/>
</dbReference>
<dbReference type="Gene3D" id="3.90.650.10">
    <property type="entry name" value="PurM-like C-terminal domain"/>
    <property type="match status" value="1"/>
</dbReference>
<dbReference type="Gene3D" id="3.30.1330.10">
    <property type="entry name" value="PurM-like, N-terminal domain"/>
    <property type="match status" value="1"/>
</dbReference>
<dbReference type="HAMAP" id="MF_00741">
    <property type="entry name" value="AIRS"/>
    <property type="match status" value="1"/>
</dbReference>
<dbReference type="InterPro" id="IPR010918">
    <property type="entry name" value="PurM-like_C_dom"/>
</dbReference>
<dbReference type="InterPro" id="IPR036676">
    <property type="entry name" value="PurM-like_C_sf"/>
</dbReference>
<dbReference type="InterPro" id="IPR016188">
    <property type="entry name" value="PurM-like_N"/>
</dbReference>
<dbReference type="InterPro" id="IPR036921">
    <property type="entry name" value="PurM-like_N_sf"/>
</dbReference>
<dbReference type="InterPro" id="IPR004733">
    <property type="entry name" value="PurM_cligase"/>
</dbReference>
<dbReference type="NCBIfam" id="TIGR00878">
    <property type="entry name" value="purM"/>
    <property type="match status" value="1"/>
</dbReference>
<dbReference type="PANTHER" id="PTHR10520:SF12">
    <property type="entry name" value="TRIFUNCTIONAL PURINE BIOSYNTHETIC PROTEIN ADENOSINE-3"/>
    <property type="match status" value="1"/>
</dbReference>
<dbReference type="PANTHER" id="PTHR10520">
    <property type="entry name" value="TRIFUNCTIONAL PURINE BIOSYNTHETIC PROTEIN ADENOSINE-3-RELATED"/>
    <property type="match status" value="1"/>
</dbReference>
<dbReference type="Pfam" id="PF00586">
    <property type="entry name" value="AIRS"/>
    <property type="match status" value="1"/>
</dbReference>
<dbReference type="Pfam" id="PF02769">
    <property type="entry name" value="AIRS_C"/>
    <property type="match status" value="1"/>
</dbReference>
<dbReference type="SUPFAM" id="SSF56042">
    <property type="entry name" value="PurM C-terminal domain-like"/>
    <property type="match status" value="1"/>
</dbReference>
<dbReference type="SUPFAM" id="SSF55326">
    <property type="entry name" value="PurM N-terminal domain-like"/>
    <property type="match status" value="1"/>
</dbReference>
<sequence>MDYRSAGVDIDLGQAFVRGIRERVERIQVPSSGSSETLGGIGGFAGLFELPTGYQAPVLVAGTDGVGTKLDIAQQWGQHQGVGVDLVAMCANDVLTVGARPLFFLDYVATGKLEPEALWQVIDGILAGCQEAGCQLLGGETAEMPGFYPPGKYDLAGFCIGIVEKTAILDGSRVQLGDRLLALPSSGLHSNGYSLVRRIVADRGWRWDHRPPGWDRPLAEVFLTPTRIYVQAVQRLQAAGIAIHGMAHITGGGIPENLPRCLAPNQAARLQPHSWPIPQEFLWLQEQGQVETLEMFRTFNLGVGYVLVIPPEAENQVRSLLPEAFPIGEVVAACPGESRVLGLEQWGSLTSPAD</sequence>
<organism>
    <name type="scientific">Synechococcus sp. (strain JA-2-3B'a(2-13))</name>
    <name type="common">Cyanobacteria bacterium Yellowstone B-Prime</name>
    <dbReference type="NCBI Taxonomy" id="321332"/>
    <lineage>
        <taxon>Bacteria</taxon>
        <taxon>Bacillati</taxon>
        <taxon>Cyanobacteriota</taxon>
        <taxon>Cyanophyceae</taxon>
        <taxon>Synechococcales</taxon>
        <taxon>Synechococcaceae</taxon>
        <taxon>Synechococcus</taxon>
    </lineage>
</organism>